<evidence type="ECO:0000255" key="1">
    <source>
        <dbReference type="HAMAP-Rule" id="MF_04120"/>
    </source>
</evidence>
<organism>
    <name type="scientific">Enterobacteria phage T3</name>
    <name type="common">Bacteriophage T3</name>
    <dbReference type="NCBI Taxonomy" id="10759"/>
    <lineage>
        <taxon>Viruses</taxon>
        <taxon>Duplodnaviria</taxon>
        <taxon>Heunggongvirae</taxon>
        <taxon>Uroviricota</taxon>
        <taxon>Caudoviricetes</taxon>
        <taxon>Autographiviridae</taxon>
        <taxon>Studiervirinae</taxon>
        <taxon>Teetrevirus</taxon>
        <taxon>Teetrevirus T3</taxon>
    </lineage>
</organism>
<feature type="chain" id="PRO_0000106516" description="Portal protein">
    <location>
        <begin position="1"/>
        <end position="535"/>
    </location>
</feature>
<protein>
    <recommendedName>
        <fullName evidence="1">Portal protein</fullName>
    </recommendedName>
    <alternativeName>
        <fullName>Gene product 8</fullName>
        <shortName>Gp8</shortName>
    </alternativeName>
    <alternativeName>
        <fullName evidence="1">Head-to-tail connector</fullName>
    </alternativeName>
</protein>
<organismHost>
    <name type="scientific">Escherichia coli</name>
    <dbReference type="NCBI Taxonomy" id="562"/>
</organismHost>
<keyword id="KW-0167">Capsid protein</keyword>
<keyword id="KW-0118">Viral capsid assembly</keyword>
<keyword id="KW-1171">Viral genome ejection through host cell envelope</keyword>
<keyword id="KW-0231">Viral genome packaging</keyword>
<keyword id="KW-1162">Viral penetration into host cytoplasm</keyword>
<keyword id="KW-1188">Viral release from host cell</keyword>
<keyword id="KW-1244">Viral short tail ejection system</keyword>
<keyword id="KW-0946">Virion</keyword>
<keyword id="KW-1160">Virus entry into host cell</keyword>
<gene>
    <name type="primary">8</name>
</gene>
<sequence>MADSKRTGLGEDGAKATYDRLTNDRRAYETRAENCAQYTIPSLFPKESDNESTDYTTPWQAVGARGLNNLASKLMLALFPMQSWMKLTISEYEAKQLVGDPDGLAKVDEGLSMVERIIMNYIESNSYRVTLFECLKQLIVAGNALLYLPEPEGSYNPMKLYRLSSYVVQRDAYGNVLQIVTRDQIAFGALPEDVRSAVEKSGGEKKMDEMVDVYTHVYLDEESGDYLKYEEVEDVEIDGSDATYPTDAMPYIPVRMVRIDGESYGRSYCEEYLGDLRSLENLQEAIVKMSMISAKVIGLVNPAGITQPRRLTKAQTGDFVPGRREDIDFLQLEKQADFTVAKAVSDQIEARLSYAFMLNSAVQRTGERVTAEEIRYVASELEDTLGGVYSILSQELQLPLVRVLLKQLQATSQIPELPKEAVEPTISTGLEAIGRGQDLDKLERCISAWAALAPMQGDPDINLAVIKLRIANAIGIDTSGILLTDEQKQALMMQDAAQTGVENAAAAGGAGVGALATSSPEAMQGAAAKAGLNAT</sequence>
<comment type="function">
    <text evidence="1">Forms the portal vertex of the capsid. This portal plays critical roles in head assembly, genome packaging, neck/tail attachment, and genome ejection. The portal protein multimerizes as a single ring-shaped homododecamer arranged around a central channel.</text>
</comment>
<comment type="subunit">
    <text evidence="1">Homododecamer. Interacts with major capsid protein. Interacts with the tail tube proteins gp11 and gp12. Interacts with the terminase large subunit. Interacts with the internal virion protein gp14.</text>
</comment>
<comment type="subcellular location">
    <subcellularLocation>
        <location evidence="1">Virion</location>
    </subcellularLocation>
</comment>
<comment type="similarity">
    <text evidence="1">Belongs to the podoviridae portal protein family.</text>
</comment>
<accession>P20323</accession>
<reference key="1">
    <citation type="journal article" date="1989" name="J. Mol. Biol.">
        <title>Sequence of bacteriophage T3 DNA from gene 2.5 through gene 9.</title>
        <authorList>
            <person name="Beck P.J."/>
            <person name="Gonzalez S."/>
            <person name="Ward C.L."/>
            <person name="Molineux I.J."/>
        </authorList>
    </citation>
    <scope>NUCLEOTIDE SEQUENCE [GENOMIC DNA]</scope>
    <source>
        <strain>Luria</strain>
    </source>
</reference>
<proteinExistence type="inferred from homology"/>
<name>PORTL_BPT3</name>
<dbReference type="EMBL" id="X17255">
    <property type="protein sequence ID" value="CAA35152.1"/>
    <property type="molecule type" value="Genomic_DNA"/>
</dbReference>
<dbReference type="PIR" id="S07521">
    <property type="entry name" value="S07521"/>
</dbReference>
<dbReference type="RefSeq" id="NP_523332.1">
    <property type="nucleotide sequence ID" value="NC_003298.1"/>
</dbReference>
<dbReference type="SMR" id="P20323"/>
<dbReference type="KEGG" id="vg:927409"/>
<dbReference type="OrthoDB" id="5112at10239"/>
<dbReference type="GO" id="GO:0046798">
    <property type="term" value="C:viral portal complex"/>
    <property type="evidence" value="ECO:0007669"/>
    <property type="project" value="UniProtKB-UniRule"/>
</dbReference>
<dbReference type="GO" id="GO:0099002">
    <property type="term" value="P:symbiont genome ejection through host cell envelope, short tail mechanism"/>
    <property type="evidence" value="ECO:0007669"/>
    <property type="project" value="UniProtKB-UniRule"/>
</dbReference>
<dbReference type="GO" id="GO:0019073">
    <property type="term" value="P:viral DNA genome packaging"/>
    <property type="evidence" value="ECO:0007669"/>
    <property type="project" value="UniProtKB-UniRule"/>
</dbReference>
<dbReference type="HAMAP" id="MF_04120">
    <property type="entry name" value="PORTAL_PROTEIN_T7"/>
    <property type="match status" value="1"/>
</dbReference>
<dbReference type="InterPro" id="IPR020991">
    <property type="entry name" value="Connector_podovirus"/>
</dbReference>
<dbReference type="InterPro" id="IPR038995">
    <property type="entry name" value="Portal_prot_Caudovirale"/>
</dbReference>
<dbReference type="Pfam" id="PF12236">
    <property type="entry name" value="Head-tail_con"/>
    <property type="match status" value="1"/>
</dbReference>